<proteinExistence type="inferred from homology"/>
<keyword id="KW-0010">Activator</keyword>
<keyword id="KW-0963">Cytoplasm</keyword>
<keyword id="KW-0238">DNA-binding</keyword>
<keyword id="KW-0677">Repeat</keyword>
<keyword id="KW-0684">Rhamnose metabolism</keyword>
<keyword id="KW-0804">Transcription</keyword>
<keyword id="KW-0805">Transcription regulation</keyword>
<evidence type="ECO:0000255" key="1">
    <source>
        <dbReference type="HAMAP-Rule" id="MF_01533"/>
    </source>
</evidence>
<comment type="function">
    <text evidence="1">Activates expression of the rhaSR operon in response to L-rhamnose.</text>
</comment>
<comment type="subunit">
    <text evidence="1">Binds DNA as a dimer.</text>
</comment>
<comment type="subcellular location">
    <subcellularLocation>
        <location evidence="1">Cytoplasm</location>
    </subcellularLocation>
</comment>
<reference key="1">
    <citation type="journal article" date="2011" name="J. Bacteriol.">
        <title>Comparative genomics of 28 Salmonella enterica isolates: evidence for CRISPR-mediated adaptive sublineage evolution.</title>
        <authorList>
            <person name="Fricke W.F."/>
            <person name="Mammel M.K."/>
            <person name="McDermott P.F."/>
            <person name="Tartera C."/>
            <person name="White D.G."/>
            <person name="Leclerc J.E."/>
            <person name="Ravel J."/>
            <person name="Cebula T.A."/>
        </authorList>
    </citation>
    <scope>NUCLEOTIDE SEQUENCE [LARGE SCALE GENOMIC DNA]</scope>
    <source>
        <strain>SL476</strain>
    </source>
</reference>
<protein>
    <recommendedName>
        <fullName evidence="1">HTH-type transcriptional activator RhaR</fullName>
    </recommendedName>
    <alternativeName>
        <fullName evidence="1">L-rhamnose operon transcriptional activator RhaR</fullName>
    </alternativeName>
</protein>
<accession>B4TBY4</accession>
<name>RHAR_SALHS</name>
<dbReference type="EMBL" id="CP001120">
    <property type="protein sequence ID" value="ACF70053.1"/>
    <property type="molecule type" value="Genomic_DNA"/>
</dbReference>
<dbReference type="RefSeq" id="WP_000013291.1">
    <property type="nucleotide sequence ID" value="NC_011083.1"/>
</dbReference>
<dbReference type="SMR" id="B4TBY4"/>
<dbReference type="KEGG" id="seh:SeHA_C4378"/>
<dbReference type="HOGENOM" id="CLU_000445_88_5_6"/>
<dbReference type="Proteomes" id="UP000001866">
    <property type="component" value="Chromosome"/>
</dbReference>
<dbReference type="GO" id="GO:0005737">
    <property type="term" value="C:cytoplasm"/>
    <property type="evidence" value="ECO:0007669"/>
    <property type="project" value="UniProtKB-SubCell"/>
</dbReference>
<dbReference type="GO" id="GO:0003700">
    <property type="term" value="F:DNA-binding transcription factor activity"/>
    <property type="evidence" value="ECO:0007669"/>
    <property type="project" value="UniProtKB-UniRule"/>
</dbReference>
<dbReference type="GO" id="GO:0043565">
    <property type="term" value="F:sequence-specific DNA binding"/>
    <property type="evidence" value="ECO:0007669"/>
    <property type="project" value="InterPro"/>
</dbReference>
<dbReference type="GO" id="GO:0045893">
    <property type="term" value="P:positive regulation of DNA-templated transcription"/>
    <property type="evidence" value="ECO:0007669"/>
    <property type="project" value="UniProtKB-UniRule"/>
</dbReference>
<dbReference type="GO" id="GO:0019299">
    <property type="term" value="P:rhamnose metabolic process"/>
    <property type="evidence" value="ECO:0007669"/>
    <property type="project" value="UniProtKB-UniRule"/>
</dbReference>
<dbReference type="CDD" id="cd06977">
    <property type="entry name" value="cupin_RhaR_RhaS-like_N"/>
    <property type="match status" value="1"/>
</dbReference>
<dbReference type="Gene3D" id="1.10.10.60">
    <property type="entry name" value="Homeodomain-like"/>
    <property type="match status" value="1"/>
</dbReference>
<dbReference type="Gene3D" id="2.60.120.10">
    <property type="entry name" value="Jelly Rolls"/>
    <property type="match status" value="1"/>
</dbReference>
<dbReference type="HAMAP" id="MF_01533">
    <property type="entry name" value="HTH_type_RhaR"/>
    <property type="match status" value="1"/>
</dbReference>
<dbReference type="InterPro" id="IPR003313">
    <property type="entry name" value="AraC-bd"/>
</dbReference>
<dbReference type="InterPro" id="IPR009057">
    <property type="entry name" value="Homeodomain-like_sf"/>
</dbReference>
<dbReference type="InterPro" id="IPR018060">
    <property type="entry name" value="HTH_AraC"/>
</dbReference>
<dbReference type="InterPro" id="IPR018062">
    <property type="entry name" value="HTH_AraC-typ_CS"/>
</dbReference>
<dbReference type="InterPro" id="IPR047220">
    <property type="entry name" value="RhaR_RhaS-like_N"/>
</dbReference>
<dbReference type="InterPro" id="IPR014710">
    <property type="entry name" value="RmlC-like_jellyroll"/>
</dbReference>
<dbReference type="InterPro" id="IPR011051">
    <property type="entry name" value="RmlC_Cupin_sf"/>
</dbReference>
<dbReference type="InterPro" id="IPR023699">
    <property type="entry name" value="Tscrpt_act_RhaR"/>
</dbReference>
<dbReference type="InterPro" id="IPR020449">
    <property type="entry name" value="Tscrpt_reg_AraC-type_HTH"/>
</dbReference>
<dbReference type="NCBIfam" id="NF010025">
    <property type="entry name" value="PRK13500.1"/>
    <property type="match status" value="1"/>
</dbReference>
<dbReference type="NCBIfam" id="NF010026">
    <property type="entry name" value="PRK13501.1"/>
    <property type="match status" value="1"/>
</dbReference>
<dbReference type="NCBIfam" id="NF010027">
    <property type="entry name" value="PRK13502.1"/>
    <property type="match status" value="1"/>
</dbReference>
<dbReference type="PANTHER" id="PTHR43280">
    <property type="entry name" value="ARAC-FAMILY TRANSCRIPTIONAL REGULATOR"/>
    <property type="match status" value="1"/>
</dbReference>
<dbReference type="PANTHER" id="PTHR43280:SF13">
    <property type="entry name" value="HTH-TYPE TRANSCRIPTIONAL ACTIVATOR RHAR"/>
    <property type="match status" value="1"/>
</dbReference>
<dbReference type="Pfam" id="PF02311">
    <property type="entry name" value="AraC_binding"/>
    <property type="match status" value="1"/>
</dbReference>
<dbReference type="Pfam" id="PF12833">
    <property type="entry name" value="HTH_18"/>
    <property type="match status" value="1"/>
</dbReference>
<dbReference type="PRINTS" id="PR00032">
    <property type="entry name" value="HTHARAC"/>
</dbReference>
<dbReference type="SMART" id="SM00342">
    <property type="entry name" value="HTH_ARAC"/>
    <property type="match status" value="1"/>
</dbReference>
<dbReference type="SUPFAM" id="SSF46689">
    <property type="entry name" value="Homeodomain-like"/>
    <property type="match status" value="1"/>
</dbReference>
<dbReference type="SUPFAM" id="SSF51182">
    <property type="entry name" value="RmlC-like cupins"/>
    <property type="match status" value="1"/>
</dbReference>
<dbReference type="PROSITE" id="PS00041">
    <property type="entry name" value="HTH_ARAC_FAMILY_1"/>
    <property type="match status" value="1"/>
</dbReference>
<dbReference type="PROSITE" id="PS01124">
    <property type="entry name" value="HTH_ARAC_FAMILY_2"/>
    <property type="match status" value="1"/>
</dbReference>
<gene>
    <name evidence="1" type="primary">rhaR</name>
    <name type="ordered locus">SeHA_C4378</name>
</gene>
<feature type="chain" id="PRO_1000200941" description="HTH-type transcriptional activator RhaR">
    <location>
        <begin position="1"/>
        <end position="282"/>
    </location>
</feature>
<feature type="domain" description="HTH araC/xylS-type" evidence="1">
    <location>
        <begin position="179"/>
        <end position="277"/>
    </location>
</feature>
<feature type="DNA-binding region" description="H-T-H motif" evidence="1">
    <location>
        <begin position="196"/>
        <end position="217"/>
    </location>
</feature>
<feature type="DNA-binding region" description="H-T-H motif" evidence="1">
    <location>
        <begin position="244"/>
        <end position="267"/>
    </location>
</feature>
<feature type="site" description="Interaction with sigma-70" evidence="1">
    <location>
        <position position="246"/>
    </location>
</feature>
<organism>
    <name type="scientific">Salmonella heidelberg (strain SL476)</name>
    <dbReference type="NCBI Taxonomy" id="454169"/>
    <lineage>
        <taxon>Bacteria</taxon>
        <taxon>Pseudomonadati</taxon>
        <taxon>Pseudomonadota</taxon>
        <taxon>Gammaproteobacteria</taxon>
        <taxon>Enterobacterales</taxon>
        <taxon>Enterobacteriaceae</taxon>
        <taxon>Salmonella</taxon>
    </lineage>
</organism>
<sequence>MANQLILLKKDFFTDEQQAVTVADRYPQDVFAEHTHEFCELVMVWRGNGLHVLNERPYRITRGDLFYIRAEDKHSYTSVNDLVLQNIIYCPERLKLNVNWQAMIPGFQGAQWHPHWRLGSMGMNQARQVINQLEHESNGRDPLANEMAELLFGQLVMTLKRHRYATDDLPATSRETLLDKLITALANSLECPFALDAFCQQEQCSERVLRQQFRAQTGMTINQYLRQVRICHAQYLLQHSPLMVSEISMQCGFEDSNYFSVVFTRETGMTPSQWRHLSNQSD</sequence>